<comment type="function">
    <text evidence="1">FliM is one of three proteins (FliG, FliN, FliM) that forms the rotor-mounted switch complex (C ring), located at the base of the basal body. This complex interacts with the CheY and CheZ chemotaxis proteins, in addition to contacting components of the motor that determine the direction of flagellar rotation (By similarity).</text>
</comment>
<comment type="subcellular location">
    <subcellularLocation>
        <location evidence="1">Cell inner membrane</location>
        <topology evidence="1">Peripheral membrane protein</topology>
    </subcellularLocation>
    <subcellularLocation>
        <location evidence="1">Bacterial flagellum basal body</location>
    </subcellularLocation>
</comment>
<comment type="similarity">
    <text evidence="2">Belongs to the FliM family.</text>
</comment>
<reference key="1">
    <citation type="journal article" date="2002" name="Science">
        <title>50 million years of genomic stasis in endosymbiotic bacteria.</title>
        <authorList>
            <person name="Tamas I."/>
            <person name="Klasson L."/>
            <person name="Canbaeck B."/>
            <person name="Naeslund A.K."/>
            <person name="Eriksson A.-S."/>
            <person name="Wernegreen J.J."/>
            <person name="Sandstroem J.P."/>
            <person name="Moran N.A."/>
            <person name="Andersson S.G.E."/>
        </authorList>
    </citation>
    <scope>NUCLEOTIDE SEQUENCE [LARGE SCALE GENOMIC DNA]</scope>
    <source>
        <strain>Sg</strain>
    </source>
</reference>
<protein>
    <recommendedName>
        <fullName>Flagellar motor switch protein FliM</fullName>
    </recommendedName>
</protein>
<evidence type="ECO:0000250" key="1"/>
<evidence type="ECO:0000305" key="2"/>
<name>FLIM_BUCAP</name>
<keyword id="KW-0975">Bacterial flagellum</keyword>
<keyword id="KW-0997">Cell inner membrane</keyword>
<keyword id="KW-1003">Cell membrane</keyword>
<keyword id="KW-0145">Chemotaxis</keyword>
<keyword id="KW-0283">Flagellar rotation</keyword>
<keyword id="KW-0472">Membrane</keyword>
<dbReference type="EMBL" id="AE013218">
    <property type="protein sequence ID" value="AAM67643.1"/>
    <property type="molecule type" value="Genomic_DNA"/>
</dbReference>
<dbReference type="SMR" id="Q8KA39"/>
<dbReference type="STRING" id="198804.BUsg_073"/>
<dbReference type="KEGG" id="bas:BUsg_073"/>
<dbReference type="eggNOG" id="COG1868">
    <property type="taxonomic scope" value="Bacteria"/>
</dbReference>
<dbReference type="HOGENOM" id="CLU_051805_0_0_6"/>
<dbReference type="Proteomes" id="UP000000416">
    <property type="component" value="Chromosome"/>
</dbReference>
<dbReference type="GO" id="GO:0009425">
    <property type="term" value="C:bacterial-type flagellum basal body"/>
    <property type="evidence" value="ECO:0007669"/>
    <property type="project" value="UniProtKB-SubCell"/>
</dbReference>
<dbReference type="GO" id="GO:0005886">
    <property type="term" value="C:plasma membrane"/>
    <property type="evidence" value="ECO:0007669"/>
    <property type="project" value="UniProtKB-SubCell"/>
</dbReference>
<dbReference type="GO" id="GO:0003774">
    <property type="term" value="F:cytoskeletal motor activity"/>
    <property type="evidence" value="ECO:0007669"/>
    <property type="project" value="InterPro"/>
</dbReference>
<dbReference type="GO" id="GO:0071978">
    <property type="term" value="P:bacterial-type flagellum-dependent swarming motility"/>
    <property type="evidence" value="ECO:0007669"/>
    <property type="project" value="TreeGrafter"/>
</dbReference>
<dbReference type="GO" id="GO:0050918">
    <property type="term" value="P:positive chemotaxis"/>
    <property type="evidence" value="ECO:0007669"/>
    <property type="project" value="TreeGrafter"/>
</dbReference>
<dbReference type="Gene3D" id="3.40.1550.10">
    <property type="entry name" value="CheC-like"/>
    <property type="match status" value="1"/>
</dbReference>
<dbReference type="InterPro" id="IPR028976">
    <property type="entry name" value="CheC-like_sf"/>
</dbReference>
<dbReference type="InterPro" id="IPR001689">
    <property type="entry name" value="Flag_FliM"/>
</dbReference>
<dbReference type="InterPro" id="IPR001543">
    <property type="entry name" value="FliN-like_C"/>
</dbReference>
<dbReference type="InterPro" id="IPR036429">
    <property type="entry name" value="SpoA-like_sf"/>
</dbReference>
<dbReference type="PANTHER" id="PTHR30034">
    <property type="entry name" value="FLAGELLAR MOTOR SWITCH PROTEIN FLIM"/>
    <property type="match status" value="1"/>
</dbReference>
<dbReference type="PANTHER" id="PTHR30034:SF6">
    <property type="entry name" value="YOP PROTEINS TRANSLOCATION PROTEIN Q"/>
    <property type="match status" value="1"/>
</dbReference>
<dbReference type="Pfam" id="PF02154">
    <property type="entry name" value="FliM"/>
    <property type="match status" value="1"/>
</dbReference>
<dbReference type="Pfam" id="PF01052">
    <property type="entry name" value="FliMN_C"/>
    <property type="match status" value="1"/>
</dbReference>
<dbReference type="SUPFAM" id="SSF101801">
    <property type="entry name" value="Surface presentation of antigens (SPOA)"/>
    <property type="match status" value="1"/>
</dbReference>
<accession>Q8KA39</accession>
<proteinExistence type="inferred from homology"/>
<feature type="chain" id="PRO_0000180925" description="Flagellar motor switch protein FliM">
    <location>
        <begin position="1"/>
        <end position="311"/>
    </location>
</feature>
<gene>
    <name type="primary">fliM</name>
    <name type="ordered locus">BUsg_073</name>
</gene>
<organism>
    <name type="scientific">Buchnera aphidicola subsp. Schizaphis graminum (strain Sg)</name>
    <dbReference type="NCBI Taxonomy" id="198804"/>
    <lineage>
        <taxon>Bacteria</taxon>
        <taxon>Pseudomonadati</taxon>
        <taxon>Pseudomonadota</taxon>
        <taxon>Gammaproteobacteria</taxon>
        <taxon>Enterobacterales</taxon>
        <taxon>Erwiniaceae</taxon>
        <taxon>Buchnera</taxon>
    </lineage>
</organism>
<sequence>MLHTMGKSTNLDNEYKIIYKREKNLDRFLDQNEMKKLEKINKKFIQKIIMIFSSFIKSNIELNFYTVKINSYTNDDKNFKHLYANSLKIETLEKKSFIFFSPNFLSVFIDFLFGGKGNSIIRMDIKKEITYTEHVINKKIVGFIIDAYCESCKDFFYIDIKFLDFNIIKLNKHFFYTNDLFITNYFSFNLNGIKIFLSILIPVSIIKEKNKKIINFLDKNIFSKKTILKENFFIENLSNIELDVTVELIPSYISKHTFDNLREGDVITIEDPGKVTVCIEKKPIFLGKHKIFDEKSIIFLEKFLHQNLEKK</sequence>